<keyword id="KW-1185">Reference proteome</keyword>
<keyword id="KW-0687">Ribonucleoprotein</keyword>
<keyword id="KW-0689">Ribosomal protein</keyword>
<keyword id="KW-0694">RNA-binding</keyword>
<keyword id="KW-0699">rRNA-binding</keyword>
<accession>B8F9F2</accession>
<reference key="1">
    <citation type="journal article" date="2012" name="Environ. Microbiol.">
        <title>The genome sequence of Desulfatibacillum alkenivorans AK-01: a blueprint for anaerobic alkane oxidation.</title>
        <authorList>
            <person name="Callaghan A.V."/>
            <person name="Morris B.E."/>
            <person name="Pereira I.A."/>
            <person name="McInerney M.J."/>
            <person name="Austin R.N."/>
            <person name="Groves J.T."/>
            <person name="Kukor J.J."/>
            <person name="Suflita J.M."/>
            <person name="Young L.Y."/>
            <person name="Zylstra G.J."/>
            <person name="Wawrik B."/>
        </authorList>
    </citation>
    <scope>NUCLEOTIDE SEQUENCE [LARGE SCALE GENOMIC DNA]</scope>
    <source>
        <strain>AK-01</strain>
    </source>
</reference>
<organism>
    <name type="scientific">Desulfatibacillum aliphaticivorans</name>
    <dbReference type="NCBI Taxonomy" id="218208"/>
    <lineage>
        <taxon>Bacteria</taxon>
        <taxon>Pseudomonadati</taxon>
        <taxon>Thermodesulfobacteriota</taxon>
        <taxon>Desulfobacteria</taxon>
        <taxon>Desulfobacterales</taxon>
        <taxon>Desulfatibacillaceae</taxon>
        <taxon>Desulfatibacillum</taxon>
    </lineage>
</organism>
<protein>
    <recommendedName>
        <fullName evidence="1">Small ribosomal subunit protein bS20</fullName>
    </recommendedName>
    <alternativeName>
        <fullName evidence="3">30S ribosomal protein S20</fullName>
    </alternativeName>
</protein>
<evidence type="ECO:0000255" key="1">
    <source>
        <dbReference type="HAMAP-Rule" id="MF_00500"/>
    </source>
</evidence>
<evidence type="ECO:0000256" key="2">
    <source>
        <dbReference type="SAM" id="MobiDB-lite"/>
    </source>
</evidence>
<evidence type="ECO:0000305" key="3"/>
<comment type="function">
    <text evidence="1">Binds directly to 16S ribosomal RNA.</text>
</comment>
<comment type="similarity">
    <text evidence="1">Belongs to the bacterial ribosomal protein bS20 family.</text>
</comment>
<proteinExistence type="inferred from homology"/>
<sequence>MANHKSALKRAKQNTIKQMRNRSYKTRLRNMVKKVNQAVEAQSVDEAKTILVETQSIIDKCASKGVIHKNTASRKISRLAKKVEALAG</sequence>
<feature type="chain" id="PRO_1000126432" description="Small ribosomal subunit protein bS20">
    <location>
        <begin position="1"/>
        <end position="88"/>
    </location>
</feature>
<feature type="region of interest" description="Disordered" evidence="2">
    <location>
        <begin position="1"/>
        <end position="23"/>
    </location>
</feature>
<feature type="compositionally biased region" description="Basic residues" evidence="2">
    <location>
        <begin position="1"/>
        <end position="12"/>
    </location>
</feature>
<dbReference type="EMBL" id="CP001322">
    <property type="protein sequence ID" value="ACL02898.1"/>
    <property type="molecule type" value="Genomic_DNA"/>
</dbReference>
<dbReference type="RefSeq" id="WP_012610334.1">
    <property type="nucleotide sequence ID" value="NC_011768.1"/>
</dbReference>
<dbReference type="SMR" id="B8F9F2"/>
<dbReference type="KEGG" id="dal:Dalk_1195"/>
<dbReference type="eggNOG" id="COG0268">
    <property type="taxonomic scope" value="Bacteria"/>
</dbReference>
<dbReference type="HOGENOM" id="CLU_160655_3_0_7"/>
<dbReference type="Proteomes" id="UP000000739">
    <property type="component" value="Chromosome"/>
</dbReference>
<dbReference type="GO" id="GO:0005829">
    <property type="term" value="C:cytosol"/>
    <property type="evidence" value="ECO:0007669"/>
    <property type="project" value="TreeGrafter"/>
</dbReference>
<dbReference type="GO" id="GO:0015935">
    <property type="term" value="C:small ribosomal subunit"/>
    <property type="evidence" value="ECO:0007669"/>
    <property type="project" value="TreeGrafter"/>
</dbReference>
<dbReference type="GO" id="GO:0070181">
    <property type="term" value="F:small ribosomal subunit rRNA binding"/>
    <property type="evidence" value="ECO:0007669"/>
    <property type="project" value="TreeGrafter"/>
</dbReference>
<dbReference type="GO" id="GO:0003735">
    <property type="term" value="F:structural constituent of ribosome"/>
    <property type="evidence" value="ECO:0007669"/>
    <property type="project" value="InterPro"/>
</dbReference>
<dbReference type="GO" id="GO:0006412">
    <property type="term" value="P:translation"/>
    <property type="evidence" value="ECO:0007669"/>
    <property type="project" value="UniProtKB-UniRule"/>
</dbReference>
<dbReference type="FunFam" id="1.20.58.110:FF:000001">
    <property type="entry name" value="30S ribosomal protein S20"/>
    <property type="match status" value="1"/>
</dbReference>
<dbReference type="Gene3D" id="1.20.58.110">
    <property type="entry name" value="Ribosomal protein S20"/>
    <property type="match status" value="1"/>
</dbReference>
<dbReference type="HAMAP" id="MF_00500">
    <property type="entry name" value="Ribosomal_bS20"/>
    <property type="match status" value="1"/>
</dbReference>
<dbReference type="InterPro" id="IPR002583">
    <property type="entry name" value="Ribosomal_bS20"/>
</dbReference>
<dbReference type="InterPro" id="IPR036510">
    <property type="entry name" value="Ribosomal_bS20_sf"/>
</dbReference>
<dbReference type="NCBIfam" id="TIGR00029">
    <property type="entry name" value="S20"/>
    <property type="match status" value="1"/>
</dbReference>
<dbReference type="PANTHER" id="PTHR33398">
    <property type="entry name" value="30S RIBOSOMAL PROTEIN S20"/>
    <property type="match status" value="1"/>
</dbReference>
<dbReference type="PANTHER" id="PTHR33398:SF1">
    <property type="entry name" value="SMALL RIBOSOMAL SUBUNIT PROTEIN BS20C"/>
    <property type="match status" value="1"/>
</dbReference>
<dbReference type="Pfam" id="PF01649">
    <property type="entry name" value="Ribosomal_S20p"/>
    <property type="match status" value="1"/>
</dbReference>
<dbReference type="SUPFAM" id="SSF46992">
    <property type="entry name" value="Ribosomal protein S20"/>
    <property type="match status" value="1"/>
</dbReference>
<gene>
    <name evidence="1" type="primary">rpsT</name>
    <name type="ordered locus">Dalk_1195</name>
</gene>
<name>RS20_DESAL</name>